<comment type="function">
    <text evidence="1">Modulates transcription in response to changes in cellular NADH/NAD(+) redox state.</text>
</comment>
<comment type="subunit">
    <text evidence="1">Homodimer.</text>
</comment>
<comment type="subcellular location">
    <subcellularLocation>
        <location evidence="1">Cytoplasm</location>
    </subcellularLocation>
</comment>
<comment type="similarity">
    <text evidence="1">Belongs to the transcriptional regulatory Rex family.</text>
</comment>
<organism>
    <name type="scientific">Bacillus mycoides (strain KBAB4)</name>
    <name type="common">Bacillus weihenstephanensis</name>
    <dbReference type="NCBI Taxonomy" id="315730"/>
    <lineage>
        <taxon>Bacteria</taxon>
        <taxon>Bacillati</taxon>
        <taxon>Bacillota</taxon>
        <taxon>Bacilli</taxon>
        <taxon>Bacillales</taxon>
        <taxon>Bacillaceae</taxon>
        <taxon>Bacillus</taxon>
        <taxon>Bacillus cereus group</taxon>
    </lineage>
</organism>
<evidence type="ECO:0000255" key="1">
    <source>
        <dbReference type="HAMAP-Rule" id="MF_01131"/>
    </source>
</evidence>
<name>REX_BACMK</name>
<protein>
    <recommendedName>
        <fullName evidence="1">Redox-sensing transcriptional repressor Rex</fullName>
    </recommendedName>
</protein>
<sequence length="209" mass="23516">MDQQKIPQATAKRLPLYYRFIQNLSLSGKQRVSSAELSEAVKVDSATIRRDFSYFGALGKKGYGYNVNYLLSFFRETLDQDDITRVALIGVGNLGTAFLHYNFTKNNNTKIEMAFDVSEEKVGTEIGGIPVYHLDELEERLSTDIQVAILTVPATVAQSVADRLAETNVHGILNFTPARLNVSENIRIHHIDLAVELQTLVYFLKNYPQ</sequence>
<proteinExistence type="inferred from homology"/>
<accession>A9VQG4</accession>
<keyword id="KW-0963">Cytoplasm</keyword>
<keyword id="KW-0238">DNA-binding</keyword>
<keyword id="KW-0520">NAD</keyword>
<keyword id="KW-0678">Repressor</keyword>
<keyword id="KW-0804">Transcription</keyword>
<keyword id="KW-0805">Transcription regulation</keyword>
<feature type="chain" id="PRO_1000137320" description="Redox-sensing transcriptional repressor Rex">
    <location>
        <begin position="1"/>
        <end position="209"/>
    </location>
</feature>
<feature type="DNA-binding region" description="H-T-H motif" evidence="1">
    <location>
        <begin position="16"/>
        <end position="55"/>
    </location>
</feature>
<feature type="binding site" evidence="1">
    <location>
        <begin position="90"/>
        <end position="95"/>
    </location>
    <ligand>
        <name>NAD(+)</name>
        <dbReference type="ChEBI" id="CHEBI:57540"/>
    </ligand>
</feature>
<dbReference type="EMBL" id="CP000903">
    <property type="protein sequence ID" value="ABY41510.1"/>
    <property type="molecule type" value="Genomic_DNA"/>
</dbReference>
<dbReference type="RefSeq" id="WP_000372704.1">
    <property type="nucleotide sequence ID" value="NZ_CAKMRX030000148.1"/>
</dbReference>
<dbReference type="SMR" id="A9VQG4"/>
<dbReference type="KEGG" id="bwe:BcerKBAB4_0242"/>
<dbReference type="eggNOG" id="COG2344">
    <property type="taxonomic scope" value="Bacteria"/>
</dbReference>
<dbReference type="HOGENOM" id="CLU_061534_1_1_9"/>
<dbReference type="Proteomes" id="UP000002154">
    <property type="component" value="Chromosome"/>
</dbReference>
<dbReference type="GO" id="GO:0005737">
    <property type="term" value="C:cytoplasm"/>
    <property type="evidence" value="ECO:0007669"/>
    <property type="project" value="UniProtKB-SubCell"/>
</dbReference>
<dbReference type="GO" id="GO:0003677">
    <property type="term" value="F:DNA binding"/>
    <property type="evidence" value="ECO:0007669"/>
    <property type="project" value="UniProtKB-UniRule"/>
</dbReference>
<dbReference type="GO" id="GO:0003700">
    <property type="term" value="F:DNA-binding transcription factor activity"/>
    <property type="evidence" value="ECO:0007669"/>
    <property type="project" value="UniProtKB-UniRule"/>
</dbReference>
<dbReference type="GO" id="GO:0045892">
    <property type="term" value="P:negative regulation of DNA-templated transcription"/>
    <property type="evidence" value="ECO:0007669"/>
    <property type="project" value="InterPro"/>
</dbReference>
<dbReference type="GO" id="GO:0051775">
    <property type="term" value="P:response to redox state"/>
    <property type="evidence" value="ECO:0007669"/>
    <property type="project" value="InterPro"/>
</dbReference>
<dbReference type="Gene3D" id="3.40.50.720">
    <property type="entry name" value="NAD(P)-binding Rossmann-like Domain"/>
    <property type="match status" value="1"/>
</dbReference>
<dbReference type="Gene3D" id="1.10.10.10">
    <property type="entry name" value="Winged helix-like DNA-binding domain superfamily/Winged helix DNA-binding domain"/>
    <property type="match status" value="1"/>
</dbReference>
<dbReference type="HAMAP" id="MF_01131">
    <property type="entry name" value="Rex"/>
    <property type="match status" value="1"/>
</dbReference>
<dbReference type="InterPro" id="IPR003781">
    <property type="entry name" value="CoA-bd"/>
</dbReference>
<dbReference type="InterPro" id="IPR036291">
    <property type="entry name" value="NAD(P)-bd_dom_sf"/>
</dbReference>
<dbReference type="InterPro" id="IPR009718">
    <property type="entry name" value="Rex_DNA-bd_C_dom"/>
</dbReference>
<dbReference type="InterPro" id="IPR022876">
    <property type="entry name" value="Tscrpt_rep_Rex"/>
</dbReference>
<dbReference type="InterPro" id="IPR036388">
    <property type="entry name" value="WH-like_DNA-bd_sf"/>
</dbReference>
<dbReference type="InterPro" id="IPR036390">
    <property type="entry name" value="WH_DNA-bd_sf"/>
</dbReference>
<dbReference type="NCBIfam" id="NF003989">
    <property type="entry name" value="PRK05472.1-3"/>
    <property type="match status" value="1"/>
</dbReference>
<dbReference type="NCBIfam" id="NF003991">
    <property type="entry name" value="PRK05472.1-5"/>
    <property type="match status" value="1"/>
</dbReference>
<dbReference type="NCBIfam" id="NF003994">
    <property type="entry name" value="PRK05472.2-3"/>
    <property type="match status" value="1"/>
</dbReference>
<dbReference type="NCBIfam" id="NF003995">
    <property type="entry name" value="PRK05472.2-4"/>
    <property type="match status" value="1"/>
</dbReference>
<dbReference type="NCBIfam" id="NF003996">
    <property type="entry name" value="PRK05472.2-5"/>
    <property type="match status" value="1"/>
</dbReference>
<dbReference type="PANTHER" id="PTHR35786">
    <property type="entry name" value="REDOX-SENSING TRANSCRIPTIONAL REPRESSOR REX"/>
    <property type="match status" value="1"/>
</dbReference>
<dbReference type="PANTHER" id="PTHR35786:SF1">
    <property type="entry name" value="REDOX-SENSING TRANSCRIPTIONAL REPRESSOR REX 1"/>
    <property type="match status" value="1"/>
</dbReference>
<dbReference type="Pfam" id="PF02629">
    <property type="entry name" value="CoA_binding"/>
    <property type="match status" value="1"/>
</dbReference>
<dbReference type="Pfam" id="PF06971">
    <property type="entry name" value="Put_DNA-bind_N"/>
    <property type="match status" value="1"/>
</dbReference>
<dbReference type="SMART" id="SM00881">
    <property type="entry name" value="CoA_binding"/>
    <property type="match status" value="1"/>
</dbReference>
<dbReference type="SUPFAM" id="SSF51735">
    <property type="entry name" value="NAD(P)-binding Rossmann-fold domains"/>
    <property type="match status" value="1"/>
</dbReference>
<dbReference type="SUPFAM" id="SSF46785">
    <property type="entry name" value="Winged helix' DNA-binding domain"/>
    <property type="match status" value="1"/>
</dbReference>
<reference key="1">
    <citation type="journal article" date="2008" name="Chem. Biol. Interact.">
        <title>Extending the Bacillus cereus group genomics to putative food-borne pathogens of different toxicity.</title>
        <authorList>
            <person name="Lapidus A."/>
            <person name="Goltsman E."/>
            <person name="Auger S."/>
            <person name="Galleron N."/>
            <person name="Segurens B."/>
            <person name="Dossat C."/>
            <person name="Land M.L."/>
            <person name="Broussolle V."/>
            <person name="Brillard J."/>
            <person name="Guinebretiere M.-H."/>
            <person name="Sanchis V."/>
            <person name="Nguen-the C."/>
            <person name="Lereclus D."/>
            <person name="Richardson P."/>
            <person name="Wincker P."/>
            <person name="Weissenbach J."/>
            <person name="Ehrlich S.D."/>
            <person name="Sorokin A."/>
        </authorList>
    </citation>
    <scope>NUCLEOTIDE SEQUENCE [LARGE SCALE GENOMIC DNA]</scope>
    <source>
        <strain>KBAB4</strain>
    </source>
</reference>
<gene>
    <name evidence="1" type="primary">rex</name>
    <name type="ordered locus">BcerKBAB4_0242</name>
</gene>